<sequence>MKRTYQPSKLVRKRRHGFRTRSETVGGRRVLANRRSKGRKKLSA</sequence>
<dbReference type="EMBL" id="CP000009">
    <property type="protein sequence ID" value="AAW61564.1"/>
    <property type="molecule type" value="Genomic_DNA"/>
</dbReference>
<dbReference type="RefSeq" id="WP_011253345.1">
    <property type="nucleotide sequence ID" value="NZ_LT900338.1"/>
</dbReference>
<dbReference type="SMR" id="Q5FPY2"/>
<dbReference type="STRING" id="290633.GOX1825"/>
<dbReference type="GeneID" id="56906161"/>
<dbReference type="KEGG" id="gox:GOX1825"/>
<dbReference type="eggNOG" id="COG0230">
    <property type="taxonomic scope" value="Bacteria"/>
</dbReference>
<dbReference type="HOGENOM" id="CLU_129938_2_0_5"/>
<dbReference type="Proteomes" id="UP000006375">
    <property type="component" value="Chromosome"/>
</dbReference>
<dbReference type="GO" id="GO:1990904">
    <property type="term" value="C:ribonucleoprotein complex"/>
    <property type="evidence" value="ECO:0007669"/>
    <property type="project" value="UniProtKB-KW"/>
</dbReference>
<dbReference type="GO" id="GO:0005840">
    <property type="term" value="C:ribosome"/>
    <property type="evidence" value="ECO:0007669"/>
    <property type="project" value="UniProtKB-KW"/>
</dbReference>
<dbReference type="GO" id="GO:0003735">
    <property type="term" value="F:structural constituent of ribosome"/>
    <property type="evidence" value="ECO:0007669"/>
    <property type="project" value="InterPro"/>
</dbReference>
<dbReference type="GO" id="GO:0006412">
    <property type="term" value="P:translation"/>
    <property type="evidence" value="ECO:0007669"/>
    <property type="project" value="UniProtKB-UniRule"/>
</dbReference>
<dbReference type="FunFam" id="1.10.287.3980:FF:000001">
    <property type="entry name" value="Mitochondrial ribosomal protein L34"/>
    <property type="match status" value="1"/>
</dbReference>
<dbReference type="Gene3D" id="1.10.287.3980">
    <property type="match status" value="1"/>
</dbReference>
<dbReference type="HAMAP" id="MF_00391">
    <property type="entry name" value="Ribosomal_bL34"/>
    <property type="match status" value="1"/>
</dbReference>
<dbReference type="InterPro" id="IPR000271">
    <property type="entry name" value="Ribosomal_bL34"/>
</dbReference>
<dbReference type="InterPro" id="IPR020939">
    <property type="entry name" value="Ribosomal_bL34_CS"/>
</dbReference>
<dbReference type="NCBIfam" id="TIGR01030">
    <property type="entry name" value="rpmH_bact"/>
    <property type="match status" value="1"/>
</dbReference>
<dbReference type="PANTHER" id="PTHR14503:SF4">
    <property type="entry name" value="LARGE RIBOSOMAL SUBUNIT PROTEIN BL34M"/>
    <property type="match status" value="1"/>
</dbReference>
<dbReference type="PANTHER" id="PTHR14503">
    <property type="entry name" value="MITOCHONDRIAL RIBOSOMAL PROTEIN 34 FAMILY MEMBER"/>
    <property type="match status" value="1"/>
</dbReference>
<dbReference type="Pfam" id="PF00468">
    <property type="entry name" value="Ribosomal_L34"/>
    <property type="match status" value="1"/>
</dbReference>
<dbReference type="PROSITE" id="PS00784">
    <property type="entry name" value="RIBOSOMAL_L34"/>
    <property type="match status" value="1"/>
</dbReference>
<evidence type="ECO:0000255" key="1">
    <source>
        <dbReference type="HAMAP-Rule" id="MF_00391"/>
    </source>
</evidence>
<evidence type="ECO:0000256" key="2">
    <source>
        <dbReference type="SAM" id="MobiDB-lite"/>
    </source>
</evidence>
<evidence type="ECO:0000305" key="3"/>
<name>RL34_GLUOX</name>
<accession>Q5FPY2</accession>
<reference key="1">
    <citation type="journal article" date="2005" name="Nat. Biotechnol.">
        <title>Complete genome sequence of the acetic acid bacterium Gluconobacter oxydans.</title>
        <authorList>
            <person name="Prust C."/>
            <person name="Hoffmeister M."/>
            <person name="Liesegang H."/>
            <person name="Wiezer A."/>
            <person name="Fricke W.F."/>
            <person name="Ehrenreich A."/>
            <person name="Gottschalk G."/>
            <person name="Deppenmeier U."/>
        </authorList>
    </citation>
    <scope>NUCLEOTIDE SEQUENCE [LARGE SCALE GENOMIC DNA]</scope>
    <source>
        <strain>621H</strain>
    </source>
</reference>
<keyword id="KW-1185">Reference proteome</keyword>
<keyword id="KW-0687">Ribonucleoprotein</keyword>
<keyword id="KW-0689">Ribosomal protein</keyword>
<feature type="chain" id="PRO_0000187388" description="Large ribosomal subunit protein bL34">
    <location>
        <begin position="1"/>
        <end position="44"/>
    </location>
</feature>
<feature type="region of interest" description="Disordered" evidence="2">
    <location>
        <begin position="1"/>
        <end position="44"/>
    </location>
</feature>
<feature type="compositionally biased region" description="Basic residues" evidence="2">
    <location>
        <begin position="10"/>
        <end position="19"/>
    </location>
</feature>
<feature type="compositionally biased region" description="Basic residues" evidence="2">
    <location>
        <begin position="31"/>
        <end position="44"/>
    </location>
</feature>
<proteinExistence type="inferred from homology"/>
<organism>
    <name type="scientific">Gluconobacter oxydans (strain 621H)</name>
    <name type="common">Gluconobacter suboxydans</name>
    <dbReference type="NCBI Taxonomy" id="290633"/>
    <lineage>
        <taxon>Bacteria</taxon>
        <taxon>Pseudomonadati</taxon>
        <taxon>Pseudomonadota</taxon>
        <taxon>Alphaproteobacteria</taxon>
        <taxon>Acetobacterales</taxon>
        <taxon>Acetobacteraceae</taxon>
        <taxon>Gluconobacter</taxon>
    </lineage>
</organism>
<gene>
    <name evidence="1" type="primary">rpmH</name>
    <name type="ordered locus">GOX1825</name>
</gene>
<protein>
    <recommendedName>
        <fullName evidence="1">Large ribosomal subunit protein bL34</fullName>
    </recommendedName>
    <alternativeName>
        <fullName evidence="3">50S ribosomal protein L34</fullName>
    </alternativeName>
</protein>
<comment type="similarity">
    <text evidence="1">Belongs to the bacterial ribosomal protein bL34 family.</text>
</comment>